<keyword id="KW-0963">Cytoplasm</keyword>
<keyword id="KW-0456">Lyase</keyword>
<keyword id="KW-0704">Schiff base</keyword>
<feature type="chain" id="PRO_1000072610" description="Deoxyribose-phosphate aldolase">
    <location>
        <begin position="1"/>
        <end position="256"/>
    </location>
</feature>
<feature type="active site" description="Proton donor/acceptor" evidence="1">
    <location>
        <position position="102"/>
    </location>
</feature>
<feature type="active site" description="Schiff-base intermediate with acetaldehyde" evidence="1">
    <location>
        <position position="165"/>
    </location>
</feature>
<feature type="active site" description="Proton donor/acceptor" evidence="1">
    <location>
        <position position="197"/>
    </location>
</feature>
<reference key="1">
    <citation type="submission" date="2006-08" db="EMBL/GenBank/DDBJ databases">
        <title>Complete sequence of chromosome 1 of Shewanella sp. MR-7.</title>
        <authorList>
            <person name="Copeland A."/>
            <person name="Lucas S."/>
            <person name="Lapidus A."/>
            <person name="Barry K."/>
            <person name="Detter J.C."/>
            <person name="Glavina del Rio T."/>
            <person name="Hammon N."/>
            <person name="Israni S."/>
            <person name="Dalin E."/>
            <person name="Tice H."/>
            <person name="Pitluck S."/>
            <person name="Kiss H."/>
            <person name="Brettin T."/>
            <person name="Bruce D."/>
            <person name="Han C."/>
            <person name="Tapia R."/>
            <person name="Gilna P."/>
            <person name="Schmutz J."/>
            <person name="Larimer F."/>
            <person name="Land M."/>
            <person name="Hauser L."/>
            <person name="Kyrpides N."/>
            <person name="Mikhailova N."/>
            <person name="Nealson K."/>
            <person name="Konstantinidis K."/>
            <person name="Klappenbach J."/>
            <person name="Tiedje J."/>
            <person name="Richardson P."/>
        </authorList>
    </citation>
    <scope>NUCLEOTIDE SEQUENCE [LARGE SCALE GENOMIC DNA]</scope>
    <source>
        <strain>MR-7</strain>
    </source>
</reference>
<name>DEOC_SHESR</name>
<sequence length="256" mass="27344">MTDLKKAAQRAIELMDLTTLNDDDTDQKVIDLCHKAVTPAGNTAAICIYPRFIPIARKTLDELGAEDIQIATVTNFPHGNDDIAIAVLETRAAVAYGADEVDVVFPYRALMEGNETVGYELVKACKEACGEVLLKVIIESGVLADPALIRRASELSIDAGADFIKTSTGKVPVNATLEAAEIMLTVISEKNTKVGFKPAGGVRDAAQAAEFLGVAERILGADWVSPRTFRFGASSLLNSLLHTLELADAPKPTQGY</sequence>
<protein>
    <recommendedName>
        <fullName evidence="1">Deoxyribose-phosphate aldolase</fullName>
        <shortName evidence="1">DERA</shortName>
        <ecNumber evidence="1">4.1.2.4</ecNumber>
    </recommendedName>
    <alternativeName>
        <fullName evidence="1">2-deoxy-D-ribose 5-phosphate aldolase</fullName>
    </alternativeName>
    <alternativeName>
        <fullName evidence="1">Phosphodeoxyriboaldolase</fullName>
        <shortName evidence="1">Deoxyriboaldolase</shortName>
    </alternativeName>
</protein>
<dbReference type="EC" id="4.1.2.4" evidence="1"/>
<dbReference type="EMBL" id="CP000444">
    <property type="protein sequence ID" value="ABI42101.1"/>
    <property type="molecule type" value="Genomic_DNA"/>
</dbReference>
<dbReference type="SMR" id="Q0HXQ4"/>
<dbReference type="KEGG" id="shm:Shewmr7_1102"/>
<dbReference type="HOGENOM" id="CLU_053595_3_1_6"/>
<dbReference type="UniPathway" id="UPA00002">
    <property type="reaction ID" value="UER00468"/>
</dbReference>
<dbReference type="GO" id="GO:0005737">
    <property type="term" value="C:cytoplasm"/>
    <property type="evidence" value="ECO:0007669"/>
    <property type="project" value="UniProtKB-SubCell"/>
</dbReference>
<dbReference type="GO" id="GO:0004139">
    <property type="term" value="F:deoxyribose-phosphate aldolase activity"/>
    <property type="evidence" value="ECO:0007669"/>
    <property type="project" value="UniProtKB-UniRule"/>
</dbReference>
<dbReference type="GO" id="GO:0006018">
    <property type="term" value="P:2-deoxyribose 1-phosphate catabolic process"/>
    <property type="evidence" value="ECO:0007669"/>
    <property type="project" value="UniProtKB-UniRule"/>
</dbReference>
<dbReference type="GO" id="GO:0016052">
    <property type="term" value="P:carbohydrate catabolic process"/>
    <property type="evidence" value="ECO:0007669"/>
    <property type="project" value="TreeGrafter"/>
</dbReference>
<dbReference type="GO" id="GO:0009264">
    <property type="term" value="P:deoxyribonucleotide catabolic process"/>
    <property type="evidence" value="ECO:0007669"/>
    <property type="project" value="InterPro"/>
</dbReference>
<dbReference type="CDD" id="cd00959">
    <property type="entry name" value="DeoC"/>
    <property type="match status" value="1"/>
</dbReference>
<dbReference type="Gene3D" id="3.20.20.70">
    <property type="entry name" value="Aldolase class I"/>
    <property type="match status" value="1"/>
</dbReference>
<dbReference type="HAMAP" id="MF_00592">
    <property type="entry name" value="DeoC_type2"/>
    <property type="match status" value="1"/>
</dbReference>
<dbReference type="InterPro" id="IPR013785">
    <property type="entry name" value="Aldolase_TIM"/>
</dbReference>
<dbReference type="InterPro" id="IPR011343">
    <property type="entry name" value="DeoC"/>
</dbReference>
<dbReference type="InterPro" id="IPR002915">
    <property type="entry name" value="DeoC/FbaB/LacD_aldolase"/>
</dbReference>
<dbReference type="InterPro" id="IPR023649">
    <property type="entry name" value="DeoC_typeII"/>
</dbReference>
<dbReference type="NCBIfam" id="TIGR00126">
    <property type="entry name" value="deoC"/>
    <property type="match status" value="1"/>
</dbReference>
<dbReference type="PANTHER" id="PTHR10889">
    <property type="entry name" value="DEOXYRIBOSE-PHOSPHATE ALDOLASE"/>
    <property type="match status" value="1"/>
</dbReference>
<dbReference type="PANTHER" id="PTHR10889:SF3">
    <property type="entry name" value="DEOXYRIBOSE-PHOSPHATE ALDOLASE"/>
    <property type="match status" value="1"/>
</dbReference>
<dbReference type="Pfam" id="PF01791">
    <property type="entry name" value="DeoC"/>
    <property type="match status" value="1"/>
</dbReference>
<dbReference type="PIRSF" id="PIRSF001357">
    <property type="entry name" value="DeoC"/>
    <property type="match status" value="1"/>
</dbReference>
<dbReference type="SMART" id="SM01133">
    <property type="entry name" value="DeoC"/>
    <property type="match status" value="1"/>
</dbReference>
<dbReference type="SUPFAM" id="SSF51569">
    <property type="entry name" value="Aldolase"/>
    <property type="match status" value="1"/>
</dbReference>
<gene>
    <name evidence="1" type="primary">deoC</name>
    <name type="ordered locus">Shewmr7_1102</name>
</gene>
<proteinExistence type="inferred from homology"/>
<organism>
    <name type="scientific">Shewanella sp. (strain MR-7)</name>
    <dbReference type="NCBI Taxonomy" id="60481"/>
    <lineage>
        <taxon>Bacteria</taxon>
        <taxon>Pseudomonadati</taxon>
        <taxon>Pseudomonadota</taxon>
        <taxon>Gammaproteobacteria</taxon>
        <taxon>Alteromonadales</taxon>
        <taxon>Shewanellaceae</taxon>
        <taxon>Shewanella</taxon>
    </lineage>
</organism>
<accession>Q0HXQ4</accession>
<comment type="function">
    <text evidence="1">Catalyzes a reversible aldol reaction between acetaldehyde and D-glyceraldehyde 3-phosphate to generate 2-deoxy-D-ribose 5-phosphate.</text>
</comment>
<comment type="catalytic activity">
    <reaction evidence="1">
        <text>2-deoxy-D-ribose 5-phosphate = D-glyceraldehyde 3-phosphate + acetaldehyde</text>
        <dbReference type="Rhea" id="RHEA:12821"/>
        <dbReference type="ChEBI" id="CHEBI:15343"/>
        <dbReference type="ChEBI" id="CHEBI:59776"/>
        <dbReference type="ChEBI" id="CHEBI:62877"/>
        <dbReference type="EC" id="4.1.2.4"/>
    </reaction>
</comment>
<comment type="pathway">
    <text evidence="1">Carbohydrate degradation; 2-deoxy-D-ribose 1-phosphate degradation; D-glyceraldehyde 3-phosphate and acetaldehyde from 2-deoxy-alpha-D-ribose 1-phosphate: step 2/2.</text>
</comment>
<comment type="subcellular location">
    <subcellularLocation>
        <location evidence="1">Cytoplasm</location>
    </subcellularLocation>
</comment>
<comment type="similarity">
    <text evidence="1">Belongs to the DeoC/FbaB aldolase family. DeoC type 2 subfamily.</text>
</comment>
<evidence type="ECO:0000255" key="1">
    <source>
        <dbReference type="HAMAP-Rule" id="MF_00592"/>
    </source>
</evidence>